<dbReference type="EMBL" id="X54639">
    <property type="protein sequence ID" value="CAA38451.1"/>
    <property type="molecule type" value="mRNA"/>
</dbReference>
<dbReference type="EMBL" id="X68077">
    <property type="protein sequence ID" value="CAA48210.1"/>
    <property type="molecule type" value="mRNA"/>
</dbReference>
<dbReference type="PIR" id="S23774">
    <property type="entry name" value="S23774"/>
</dbReference>
<dbReference type="RefSeq" id="NP_001414040.1">
    <property type="nucleotide sequence ID" value="NM_001427111.1"/>
</dbReference>
<dbReference type="SMR" id="P21727"/>
<dbReference type="GeneID" id="127108066"/>
<dbReference type="OrthoDB" id="6418713at2759"/>
<dbReference type="GO" id="GO:0031969">
    <property type="term" value="C:chloroplast membrane"/>
    <property type="evidence" value="ECO:0007669"/>
    <property type="project" value="UniProtKB-SubCell"/>
</dbReference>
<dbReference type="GO" id="GO:0015605">
    <property type="term" value="F:organophosphate ester transmembrane transporter activity"/>
    <property type="evidence" value="ECO:0007669"/>
    <property type="project" value="UniProtKB-ARBA"/>
</dbReference>
<dbReference type="GO" id="GO:0015120">
    <property type="term" value="F:phosphoglycerate transmembrane transporter activity"/>
    <property type="evidence" value="ECO:0007669"/>
    <property type="project" value="UniProtKB-ARBA"/>
</dbReference>
<dbReference type="InterPro" id="IPR004853">
    <property type="entry name" value="Sugar_P_trans_dom"/>
</dbReference>
<dbReference type="InterPro" id="IPR004696">
    <property type="entry name" value="Tpt_PEP_transl"/>
</dbReference>
<dbReference type="InterPro" id="IPR050186">
    <property type="entry name" value="TPT_transporter"/>
</dbReference>
<dbReference type="NCBIfam" id="TIGR00817">
    <property type="entry name" value="tpt"/>
    <property type="match status" value="1"/>
</dbReference>
<dbReference type="PANTHER" id="PTHR11132">
    <property type="entry name" value="SOLUTE CARRIER FAMILY 35"/>
    <property type="match status" value="1"/>
</dbReference>
<dbReference type="Pfam" id="PF03151">
    <property type="entry name" value="TPT"/>
    <property type="match status" value="1"/>
</dbReference>
<dbReference type="SUPFAM" id="SSF103481">
    <property type="entry name" value="Multidrug resistance efflux transporter EmrE"/>
    <property type="match status" value="2"/>
</dbReference>
<feature type="transit peptide" description="Chloroplast" evidence="3 4">
    <location>
        <begin position="1"/>
        <end position="72"/>
    </location>
</feature>
<feature type="chain" id="PRO_0000035708" description="Triose phosphate/phosphate translocator, chloroplastic">
    <location>
        <begin position="73"/>
        <end position="402"/>
    </location>
</feature>
<feature type="topological domain" description="Chloroplast intermembrane" evidence="2">
    <location>
        <begin position="73"/>
        <end position="96"/>
    </location>
</feature>
<feature type="transmembrane region" description="Helical" evidence="2">
    <location>
        <begin position="97"/>
        <end position="117"/>
    </location>
</feature>
<feature type="topological domain" description="Lumenal" evidence="2">
    <location>
        <begin position="118"/>
        <end position="129"/>
    </location>
</feature>
<feature type="transmembrane region" description="Helical" evidence="2">
    <location>
        <begin position="130"/>
        <end position="150"/>
    </location>
</feature>
<feature type="topological domain" description="Chloroplast intermembrane" evidence="2">
    <location>
        <begin position="151"/>
        <end position="207"/>
    </location>
</feature>
<feature type="transmembrane region" description="Helical" evidence="2">
    <location>
        <begin position="208"/>
        <end position="228"/>
    </location>
</feature>
<feature type="topological domain" description="Lumenal" evidence="2">
    <location>
        <begin position="229"/>
        <end position="272"/>
    </location>
</feature>
<feature type="transmembrane region" description="Helical" evidence="2">
    <location>
        <begin position="273"/>
        <end position="292"/>
    </location>
</feature>
<feature type="topological domain" description="Chloroplast intermembrane" evidence="2">
    <location>
        <begin position="293"/>
        <end position="370"/>
    </location>
</feature>
<feature type="transmembrane region" description="Helical" evidence="2">
    <location>
        <begin position="371"/>
        <end position="391"/>
    </location>
</feature>
<feature type="topological domain" description="Lumenal" evidence="2">
    <location>
        <begin position="392"/>
        <end position="402"/>
    </location>
</feature>
<feature type="sequence variant">
    <original>I</original>
    <variation>L</variation>
    <location>
        <position position="227"/>
    </location>
</feature>
<comment type="function">
    <text>Mediates the export of fixed carbons from the chloroplasts into the cytosol in the form of triose phosphates.</text>
</comment>
<comment type="subunit">
    <text evidence="1">Homodimer.</text>
</comment>
<comment type="subcellular location">
    <subcellularLocation>
        <location>Plastid</location>
        <location>Chloroplast membrane</location>
        <topology>Multi-pass membrane protein</topology>
    </subcellularLocation>
    <text>Located in zones of contact between the inner and outer membrane of the chloroplast.</text>
</comment>
<comment type="similarity">
    <text evidence="5">Belongs to the TPT transporter family. TPT (TC 2.A.7.9) subfamily.</text>
</comment>
<comment type="caution">
    <text evidence="5">Was originally thought to function as a chloroplast protein import receptor.</text>
</comment>
<protein>
    <recommendedName>
        <fullName>Triose phosphate/phosphate translocator, chloroplastic</fullName>
        <shortName>cTPT</shortName>
    </recommendedName>
    <alternativeName>
        <fullName>E30</fullName>
    </alternativeName>
    <alternativeName>
        <fullName>p36</fullName>
    </alternativeName>
</protein>
<proteinExistence type="evidence at protein level"/>
<reference key="1">
    <citation type="journal article" date="1990" name="J. Cell Biol.">
        <title>The chloroplast import receptor is an integral membrane protein of chloroplast envelope contact sites.</title>
        <authorList>
            <person name="Schnell D.J."/>
            <person name="Blobel G."/>
            <person name="Pain D."/>
        </authorList>
    </citation>
    <scope>NUCLEOTIDE SEQUENCE [MRNA]</scope>
    <scope>PROTEIN SEQUENCE OF 73-98; 249-260; 269-289 AND 324-350</scope>
    <source>
        <strain>cv. Progress No. 9</strain>
        <tissue>Seedling</tissue>
    </source>
</reference>
<reference key="2">
    <citation type="journal article" date="1991" name="Planta">
        <title>Molecular cloning and structural analysis of the phosphate translocator from pea chloroplasts and its comparison to the spinach phosphate translocator.</title>
        <authorList>
            <person name="Willey D.L."/>
            <person name="Fischer K."/>
            <person name="Wachter E."/>
            <person name="Link T.A."/>
            <person name="Fluegge U.-I."/>
        </authorList>
    </citation>
    <scope>NUCLEOTIDE SEQUENCE [MRNA]</scope>
    <scope>PROTEIN SEQUENCE OF 73-82</scope>
    <source>
        <tissue>Leaf</tissue>
    </source>
</reference>
<reference key="3">
    <citation type="submission" date="1992-09" db="EMBL/GenBank/DDBJ databases">
        <authorList>
            <person name="Weber A."/>
        </authorList>
    </citation>
    <scope>NUCLEOTIDE SEQUENCE [MRNA]</scope>
</reference>
<organism>
    <name type="scientific">Pisum sativum</name>
    <name type="common">Garden pea</name>
    <name type="synonym">Lathyrus oleraceus</name>
    <dbReference type="NCBI Taxonomy" id="3888"/>
    <lineage>
        <taxon>Eukaryota</taxon>
        <taxon>Viridiplantae</taxon>
        <taxon>Streptophyta</taxon>
        <taxon>Embryophyta</taxon>
        <taxon>Tracheophyta</taxon>
        <taxon>Spermatophyta</taxon>
        <taxon>Magnoliopsida</taxon>
        <taxon>eudicotyledons</taxon>
        <taxon>Gunneridae</taxon>
        <taxon>Pentapetalae</taxon>
        <taxon>rosids</taxon>
        <taxon>fabids</taxon>
        <taxon>Fabales</taxon>
        <taxon>Fabaceae</taxon>
        <taxon>Papilionoideae</taxon>
        <taxon>50 kb inversion clade</taxon>
        <taxon>NPAAA clade</taxon>
        <taxon>Hologalegina</taxon>
        <taxon>IRL clade</taxon>
        <taxon>Fabeae</taxon>
        <taxon>Pisum</taxon>
    </lineage>
</organism>
<accession>P21727</accession>
<sequence length="402" mass="43649">MESRVLSRATTLSSLPTLNKLHRLPLANASLPSVKSFGSVSDGGNLVWGRQLRPELCSPVLKKGASLLRPCPATAGGNDSAGEEKVAPVGFFSRYPALTTGFFFFTWYFLNVIFNILNKKIYNYFPYPYFVSVIHLAVGVVYCLVSWTVGLPKRAPIDGNLLKLLIPVAVCHALGHVTSNVSFAAVAVSFTHTVKALEPFFNAAASQFILGQSIPITLWLSLAPVVIGVSMASLTELSFNWLGFISAMISNISFTYRSIYSKKAMTDMDSTNIYAYISIIALIVCIPPALIIEGPTLLKTGFNDAIAKVGLVKFVSDLFWVGMFYHLYNQVATNTLERVAPLTHAVGNVLKRVFVIGFSIIIFGNKISTQTGIGTGIAIAGVALYSFIKAQIEEEKRQAKAA</sequence>
<name>TPT_PEA</name>
<keyword id="KW-0150">Chloroplast</keyword>
<keyword id="KW-0903">Direct protein sequencing</keyword>
<keyword id="KW-0472">Membrane</keyword>
<keyword id="KW-0934">Plastid</keyword>
<keyword id="KW-0809">Transit peptide</keyword>
<keyword id="KW-0812">Transmembrane</keyword>
<keyword id="KW-1133">Transmembrane helix</keyword>
<keyword id="KW-0813">Transport</keyword>
<evidence type="ECO:0000250" key="1"/>
<evidence type="ECO:0000255" key="2"/>
<evidence type="ECO:0000269" key="3">
    <source>
    </source>
</evidence>
<evidence type="ECO:0000269" key="4">
    <source ref="2"/>
</evidence>
<evidence type="ECO:0000305" key="5"/>